<organism>
    <name type="scientific">Pseudomonas putida (strain ATCC 47054 / DSM 6125 / CFBP 8728 / NCIMB 11950 / KT2440)</name>
    <dbReference type="NCBI Taxonomy" id="160488"/>
    <lineage>
        <taxon>Bacteria</taxon>
        <taxon>Pseudomonadati</taxon>
        <taxon>Pseudomonadota</taxon>
        <taxon>Gammaproteobacteria</taxon>
        <taxon>Pseudomonadales</taxon>
        <taxon>Pseudomonadaceae</taxon>
        <taxon>Pseudomonas</taxon>
    </lineage>
</organism>
<gene>
    <name evidence="1" type="primary">mutS</name>
    <name type="ordered locus">PP_1626</name>
</gene>
<comment type="function">
    <text evidence="1">This protein is involved in the repair of mismatches in DNA. It is possible that it carries out the mismatch recognition step. This protein has a weak ATPase activity.</text>
</comment>
<comment type="similarity">
    <text evidence="1">Belongs to the DNA mismatch repair MutS family.</text>
</comment>
<feature type="chain" id="PRO_0000115122" description="DNA mismatch repair protein MutS">
    <location>
        <begin position="1"/>
        <end position="857"/>
    </location>
</feature>
<feature type="region of interest" description="Disordered" evidence="2">
    <location>
        <begin position="797"/>
        <end position="820"/>
    </location>
</feature>
<feature type="binding site" evidence="1">
    <location>
        <begin position="613"/>
        <end position="620"/>
    </location>
    <ligand>
        <name>ATP</name>
        <dbReference type="ChEBI" id="CHEBI:30616"/>
    </ligand>
</feature>
<accession>Q88ME7</accession>
<evidence type="ECO:0000255" key="1">
    <source>
        <dbReference type="HAMAP-Rule" id="MF_00096"/>
    </source>
</evidence>
<evidence type="ECO:0000256" key="2">
    <source>
        <dbReference type="SAM" id="MobiDB-lite"/>
    </source>
</evidence>
<sequence length="857" mass="95112">MSDLSAHTPMMQQYWKLKNQHPDQLMFYRMGDFYEIFYEDAKKAAKLLDITLTARGQSAGQSIPMCGIPFHSLEGYLAKLVKLGESVVICEQIGDPATSKGPVERQVVRIITPGTVSDEALLDERRDNLIAALLGDERLFGLAVLDITSGNFSVQEIKGWENLLAELERLNPVELLIPDDWPRDLPAEKRPGARRRAPWDFDRDSARKALCQQFATKDLKGFGCDKLTLAIGAAGCLLTYAKETQRTALPHLRSLRHERLDDTVILDGASRRNLELDINLAGGRDNTLQSVIDRCQTAMASRLLSRWLNRPLRDLKVLQARQDSIRCLLDSYRFEKLQPQLKEIGDIERILARIGLRNARPRDLARLRDALGALPELQNAMTELEAPHLARLAAITGTYPELASLLERAIIDNPPAVIRDGGVLKAGYDNELDELLAISENAGQFLIDLEAREKARTGLANLKVGYNRVHGYFIELPTKQAEQAPGDYIRRQTLKGAERFITPELKAFEDKALSAKSRALAREKMLYDALLETLISHLAPLQDSAAALAELDVLSNLAERALNLDLNCPRFVDEPCLRIEQGRHPVVEQVLTTPFVANDLGLDNSTRMLIITGPNMGGKSTYMRQTALIVLLAHIGSFVPAASCELSLVDRIFTRIGSSDDLAGGRSTFMVEMSETANILHNATDRSLVLMDEVGRGTSTFDGLSLAWAAAERLAQLRAYTLFATHYFELTVLPESEPLVANVHLNATEHNERIVFLHHVLPGPASQSYGLAVAQLAGVPTAVIQRAREHLGRLETTSLPHEQPAAHKAKDAPQVPHQSDLFASLPHPAIEKLGKLQLDDMTPRQAIEMLYQLKNLL</sequence>
<name>MUTS_PSEPK</name>
<protein>
    <recommendedName>
        <fullName evidence="1">DNA mismatch repair protein MutS</fullName>
    </recommendedName>
</protein>
<keyword id="KW-0067">ATP-binding</keyword>
<keyword id="KW-0227">DNA damage</keyword>
<keyword id="KW-0234">DNA repair</keyword>
<keyword id="KW-0238">DNA-binding</keyword>
<keyword id="KW-0547">Nucleotide-binding</keyword>
<keyword id="KW-1185">Reference proteome</keyword>
<proteinExistence type="inferred from homology"/>
<reference key="1">
    <citation type="journal article" date="2002" name="Environ. Microbiol.">
        <title>Complete genome sequence and comparative analysis of the metabolically versatile Pseudomonas putida KT2440.</title>
        <authorList>
            <person name="Nelson K.E."/>
            <person name="Weinel C."/>
            <person name="Paulsen I.T."/>
            <person name="Dodson R.J."/>
            <person name="Hilbert H."/>
            <person name="Martins dos Santos V.A.P."/>
            <person name="Fouts D.E."/>
            <person name="Gill S.R."/>
            <person name="Pop M."/>
            <person name="Holmes M."/>
            <person name="Brinkac L.M."/>
            <person name="Beanan M.J."/>
            <person name="DeBoy R.T."/>
            <person name="Daugherty S.C."/>
            <person name="Kolonay J.F."/>
            <person name="Madupu R."/>
            <person name="Nelson W.C."/>
            <person name="White O."/>
            <person name="Peterson J.D."/>
            <person name="Khouri H.M."/>
            <person name="Hance I."/>
            <person name="Chris Lee P."/>
            <person name="Holtzapple E.K."/>
            <person name="Scanlan D."/>
            <person name="Tran K."/>
            <person name="Moazzez A."/>
            <person name="Utterback T.R."/>
            <person name="Rizzo M."/>
            <person name="Lee K."/>
            <person name="Kosack D."/>
            <person name="Moestl D."/>
            <person name="Wedler H."/>
            <person name="Lauber J."/>
            <person name="Stjepandic D."/>
            <person name="Hoheisel J."/>
            <person name="Straetz M."/>
            <person name="Heim S."/>
            <person name="Kiewitz C."/>
            <person name="Eisen J.A."/>
            <person name="Timmis K.N."/>
            <person name="Duesterhoeft A."/>
            <person name="Tuemmler B."/>
            <person name="Fraser C.M."/>
        </authorList>
    </citation>
    <scope>NUCLEOTIDE SEQUENCE [LARGE SCALE GENOMIC DNA]</scope>
    <source>
        <strain>ATCC 47054 / DSM 6125 / CFBP 8728 / NCIMB 11950 / KT2440</strain>
    </source>
</reference>
<dbReference type="EMBL" id="AE015451">
    <property type="protein sequence ID" value="AAN67247.1"/>
    <property type="molecule type" value="Genomic_DNA"/>
</dbReference>
<dbReference type="RefSeq" id="NP_743783.1">
    <property type="nucleotide sequence ID" value="NC_002947.4"/>
</dbReference>
<dbReference type="RefSeq" id="WP_010952693.1">
    <property type="nucleotide sequence ID" value="NZ_CP169744.1"/>
</dbReference>
<dbReference type="SMR" id="Q88ME7"/>
<dbReference type="STRING" id="160488.PP_1626"/>
<dbReference type="PaxDb" id="160488-PP_1626"/>
<dbReference type="GeneID" id="83681896"/>
<dbReference type="KEGG" id="ppu:PP_1626"/>
<dbReference type="PATRIC" id="fig|160488.4.peg.1718"/>
<dbReference type="eggNOG" id="COG0249">
    <property type="taxonomic scope" value="Bacteria"/>
</dbReference>
<dbReference type="HOGENOM" id="CLU_002472_4_0_6"/>
<dbReference type="OrthoDB" id="9802448at2"/>
<dbReference type="PhylomeDB" id="Q88ME7"/>
<dbReference type="BioCyc" id="PPUT160488:G1G01-1724-MONOMER"/>
<dbReference type="Proteomes" id="UP000000556">
    <property type="component" value="Chromosome"/>
</dbReference>
<dbReference type="GO" id="GO:0005829">
    <property type="term" value="C:cytosol"/>
    <property type="evidence" value="ECO:0007669"/>
    <property type="project" value="TreeGrafter"/>
</dbReference>
<dbReference type="GO" id="GO:0005524">
    <property type="term" value="F:ATP binding"/>
    <property type="evidence" value="ECO:0007669"/>
    <property type="project" value="UniProtKB-UniRule"/>
</dbReference>
<dbReference type="GO" id="GO:0140664">
    <property type="term" value="F:ATP-dependent DNA damage sensor activity"/>
    <property type="evidence" value="ECO:0007669"/>
    <property type="project" value="InterPro"/>
</dbReference>
<dbReference type="GO" id="GO:0003684">
    <property type="term" value="F:damaged DNA binding"/>
    <property type="evidence" value="ECO:0007669"/>
    <property type="project" value="UniProtKB-UniRule"/>
</dbReference>
<dbReference type="GO" id="GO:0030983">
    <property type="term" value="F:mismatched DNA binding"/>
    <property type="evidence" value="ECO:0007669"/>
    <property type="project" value="InterPro"/>
</dbReference>
<dbReference type="GO" id="GO:0006298">
    <property type="term" value="P:mismatch repair"/>
    <property type="evidence" value="ECO:0007669"/>
    <property type="project" value="UniProtKB-UniRule"/>
</dbReference>
<dbReference type="CDD" id="cd03284">
    <property type="entry name" value="ABC_MutS1"/>
    <property type="match status" value="1"/>
</dbReference>
<dbReference type="FunFam" id="1.10.1420.10:FF:000002">
    <property type="entry name" value="DNA mismatch repair protein MutS"/>
    <property type="match status" value="1"/>
</dbReference>
<dbReference type="FunFam" id="3.40.1170.10:FF:000001">
    <property type="entry name" value="DNA mismatch repair protein MutS"/>
    <property type="match status" value="1"/>
</dbReference>
<dbReference type="FunFam" id="3.40.50.300:FF:000283">
    <property type="entry name" value="DNA mismatch repair protein MutS"/>
    <property type="match status" value="1"/>
</dbReference>
<dbReference type="Gene3D" id="1.10.1420.10">
    <property type="match status" value="2"/>
</dbReference>
<dbReference type="Gene3D" id="6.10.140.430">
    <property type="match status" value="1"/>
</dbReference>
<dbReference type="Gene3D" id="3.40.1170.10">
    <property type="entry name" value="DNA repair protein MutS, domain I"/>
    <property type="match status" value="1"/>
</dbReference>
<dbReference type="Gene3D" id="3.30.420.110">
    <property type="entry name" value="MutS, connector domain"/>
    <property type="match status" value="1"/>
</dbReference>
<dbReference type="Gene3D" id="3.40.50.300">
    <property type="entry name" value="P-loop containing nucleotide triphosphate hydrolases"/>
    <property type="match status" value="1"/>
</dbReference>
<dbReference type="HAMAP" id="MF_00096">
    <property type="entry name" value="MutS"/>
    <property type="match status" value="1"/>
</dbReference>
<dbReference type="InterPro" id="IPR005748">
    <property type="entry name" value="DNA_mismatch_repair_MutS"/>
</dbReference>
<dbReference type="InterPro" id="IPR007695">
    <property type="entry name" value="DNA_mismatch_repair_MutS-lik_N"/>
</dbReference>
<dbReference type="InterPro" id="IPR017261">
    <property type="entry name" value="DNA_mismatch_repair_MutS/MSH"/>
</dbReference>
<dbReference type="InterPro" id="IPR000432">
    <property type="entry name" value="DNA_mismatch_repair_MutS_C"/>
</dbReference>
<dbReference type="InterPro" id="IPR007861">
    <property type="entry name" value="DNA_mismatch_repair_MutS_clamp"/>
</dbReference>
<dbReference type="InterPro" id="IPR007696">
    <property type="entry name" value="DNA_mismatch_repair_MutS_core"/>
</dbReference>
<dbReference type="InterPro" id="IPR016151">
    <property type="entry name" value="DNA_mismatch_repair_MutS_N"/>
</dbReference>
<dbReference type="InterPro" id="IPR036187">
    <property type="entry name" value="DNA_mismatch_repair_MutS_sf"/>
</dbReference>
<dbReference type="InterPro" id="IPR007860">
    <property type="entry name" value="DNA_mmatch_repair_MutS_con_dom"/>
</dbReference>
<dbReference type="InterPro" id="IPR045076">
    <property type="entry name" value="MutS"/>
</dbReference>
<dbReference type="InterPro" id="IPR036678">
    <property type="entry name" value="MutS_con_dom_sf"/>
</dbReference>
<dbReference type="InterPro" id="IPR027417">
    <property type="entry name" value="P-loop_NTPase"/>
</dbReference>
<dbReference type="NCBIfam" id="TIGR01070">
    <property type="entry name" value="mutS1"/>
    <property type="match status" value="1"/>
</dbReference>
<dbReference type="NCBIfam" id="NF003810">
    <property type="entry name" value="PRK05399.1"/>
    <property type="match status" value="1"/>
</dbReference>
<dbReference type="PANTHER" id="PTHR11361:SF34">
    <property type="entry name" value="DNA MISMATCH REPAIR PROTEIN MSH1, MITOCHONDRIAL"/>
    <property type="match status" value="1"/>
</dbReference>
<dbReference type="PANTHER" id="PTHR11361">
    <property type="entry name" value="DNA MISMATCH REPAIR PROTEIN MUTS FAMILY MEMBER"/>
    <property type="match status" value="1"/>
</dbReference>
<dbReference type="Pfam" id="PF01624">
    <property type="entry name" value="MutS_I"/>
    <property type="match status" value="1"/>
</dbReference>
<dbReference type="Pfam" id="PF05188">
    <property type="entry name" value="MutS_II"/>
    <property type="match status" value="1"/>
</dbReference>
<dbReference type="Pfam" id="PF05192">
    <property type="entry name" value="MutS_III"/>
    <property type="match status" value="1"/>
</dbReference>
<dbReference type="Pfam" id="PF05190">
    <property type="entry name" value="MutS_IV"/>
    <property type="match status" value="1"/>
</dbReference>
<dbReference type="Pfam" id="PF00488">
    <property type="entry name" value="MutS_V"/>
    <property type="match status" value="1"/>
</dbReference>
<dbReference type="PIRSF" id="PIRSF037677">
    <property type="entry name" value="DNA_mis_repair_Msh6"/>
    <property type="match status" value="1"/>
</dbReference>
<dbReference type="SMART" id="SM00534">
    <property type="entry name" value="MUTSac"/>
    <property type="match status" value="1"/>
</dbReference>
<dbReference type="SMART" id="SM00533">
    <property type="entry name" value="MUTSd"/>
    <property type="match status" value="1"/>
</dbReference>
<dbReference type="SUPFAM" id="SSF55271">
    <property type="entry name" value="DNA repair protein MutS, domain I"/>
    <property type="match status" value="1"/>
</dbReference>
<dbReference type="SUPFAM" id="SSF53150">
    <property type="entry name" value="DNA repair protein MutS, domain II"/>
    <property type="match status" value="1"/>
</dbReference>
<dbReference type="SUPFAM" id="SSF48334">
    <property type="entry name" value="DNA repair protein MutS, domain III"/>
    <property type="match status" value="1"/>
</dbReference>
<dbReference type="SUPFAM" id="SSF52540">
    <property type="entry name" value="P-loop containing nucleoside triphosphate hydrolases"/>
    <property type="match status" value="1"/>
</dbReference>
<dbReference type="PROSITE" id="PS00486">
    <property type="entry name" value="DNA_MISMATCH_REPAIR_2"/>
    <property type="match status" value="1"/>
</dbReference>